<protein>
    <recommendedName>
        <fullName evidence="1">NAD(P)H-quinone oxidoreductase subunit 1, chloroplastic</fullName>
        <ecNumber evidence="1">7.1.1.-</ecNumber>
    </recommendedName>
    <alternativeName>
        <fullName evidence="1">NAD(P)H dehydrogenase subunit 1</fullName>
        <shortName evidence="1">NDH subunit 1</shortName>
    </alternativeName>
    <alternativeName>
        <fullName evidence="1">NADH-plastoquinone oxidoreductase subunit 1</fullName>
    </alternativeName>
</protein>
<comment type="function">
    <text evidence="1">NDH shuttles electrons from NAD(P)H:plastoquinone, via FMN and iron-sulfur (Fe-S) centers, to quinones in the photosynthetic chain and possibly in a chloroplast respiratory chain. The immediate electron acceptor for the enzyme in this species is believed to be plastoquinone. Couples the redox reaction to proton translocation, and thus conserves the redox energy in a proton gradient.</text>
</comment>
<comment type="catalytic activity">
    <reaction evidence="1">
        <text>a plastoquinone + NADH + (n+1) H(+)(in) = a plastoquinol + NAD(+) + n H(+)(out)</text>
        <dbReference type="Rhea" id="RHEA:42608"/>
        <dbReference type="Rhea" id="RHEA-COMP:9561"/>
        <dbReference type="Rhea" id="RHEA-COMP:9562"/>
        <dbReference type="ChEBI" id="CHEBI:15378"/>
        <dbReference type="ChEBI" id="CHEBI:17757"/>
        <dbReference type="ChEBI" id="CHEBI:57540"/>
        <dbReference type="ChEBI" id="CHEBI:57945"/>
        <dbReference type="ChEBI" id="CHEBI:62192"/>
    </reaction>
</comment>
<comment type="catalytic activity">
    <reaction evidence="1">
        <text>a plastoquinone + NADPH + (n+1) H(+)(in) = a plastoquinol + NADP(+) + n H(+)(out)</text>
        <dbReference type="Rhea" id="RHEA:42612"/>
        <dbReference type="Rhea" id="RHEA-COMP:9561"/>
        <dbReference type="Rhea" id="RHEA-COMP:9562"/>
        <dbReference type="ChEBI" id="CHEBI:15378"/>
        <dbReference type="ChEBI" id="CHEBI:17757"/>
        <dbReference type="ChEBI" id="CHEBI:57783"/>
        <dbReference type="ChEBI" id="CHEBI:58349"/>
        <dbReference type="ChEBI" id="CHEBI:62192"/>
    </reaction>
</comment>
<comment type="subunit">
    <text evidence="1">NDH is composed of at least 16 different subunits, 5 of which are encoded in the nucleus.</text>
</comment>
<comment type="subcellular location">
    <subcellularLocation>
        <location evidence="1">Plastid</location>
        <location evidence="1">Chloroplast thylakoid membrane</location>
        <topology evidence="1">Multi-pass membrane protein</topology>
    </subcellularLocation>
</comment>
<comment type="similarity">
    <text evidence="1">Belongs to the complex I subunit 1 family.</text>
</comment>
<geneLocation type="chloroplast"/>
<reference key="1">
    <citation type="journal article" date="2006" name="Mol. Biol. Evol.">
        <title>The complete chloroplast genome sequence of Pelargonium x hortorum: organization and evolution of the largest and most highly rearranged chloroplast genome of land plants.</title>
        <authorList>
            <person name="Chumley T.W."/>
            <person name="Palmer J.D."/>
            <person name="Mower J.P."/>
            <person name="Fourcade H.M."/>
            <person name="Calie P.J."/>
            <person name="Boore J.L."/>
            <person name="Jansen R.K."/>
        </authorList>
    </citation>
    <scope>NUCLEOTIDE SEQUENCE [LARGE SCALE GENOMIC DNA]</scope>
    <source>
        <strain>cv. Ringo White</strain>
    </source>
</reference>
<feature type="chain" id="PRO_0000275585" description="NAD(P)H-quinone oxidoreductase subunit 1, chloroplastic">
    <location>
        <begin position="1"/>
        <end position="363"/>
    </location>
</feature>
<feature type="transmembrane region" description="Helical" evidence="1">
    <location>
        <begin position="30"/>
        <end position="50"/>
    </location>
</feature>
<feature type="transmembrane region" description="Helical" evidence="1">
    <location>
        <begin position="98"/>
        <end position="118"/>
    </location>
</feature>
<feature type="transmembrane region" description="Helical" evidence="1">
    <location>
        <begin position="129"/>
        <end position="149"/>
    </location>
</feature>
<feature type="transmembrane region" description="Helical" evidence="1">
    <location>
        <begin position="165"/>
        <end position="185"/>
    </location>
</feature>
<feature type="transmembrane region" description="Helical" evidence="1">
    <location>
        <begin position="253"/>
        <end position="273"/>
    </location>
</feature>
<feature type="transmembrane region" description="Helical" evidence="1">
    <location>
        <begin position="303"/>
        <end position="323"/>
    </location>
</feature>
<feature type="transmembrane region" description="Helical" evidence="1">
    <location>
        <begin position="336"/>
        <end position="356"/>
    </location>
</feature>
<gene>
    <name evidence="1" type="primary">ndhA</name>
</gene>
<evidence type="ECO:0000255" key="1">
    <source>
        <dbReference type="HAMAP-Rule" id="MF_01350"/>
    </source>
</evidence>
<proteinExistence type="inferred from homology"/>
<dbReference type="EC" id="7.1.1.-" evidence="1"/>
<dbReference type="EMBL" id="DQ897681">
    <property type="protein sequence ID" value="ABI17323.1"/>
    <property type="molecule type" value="Genomic_DNA"/>
</dbReference>
<dbReference type="RefSeq" id="YP_784132.1">
    <property type="nucleotide sequence ID" value="NC_008454.1"/>
</dbReference>
<dbReference type="SMR" id="Q06FP9"/>
<dbReference type="GeneID" id="4362885"/>
<dbReference type="GO" id="GO:0009535">
    <property type="term" value="C:chloroplast thylakoid membrane"/>
    <property type="evidence" value="ECO:0007669"/>
    <property type="project" value="UniProtKB-SubCell"/>
</dbReference>
<dbReference type="GO" id="GO:0003954">
    <property type="term" value="F:NADH dehydrogenase activity"/>
    <property type="evidence" value="ECO:0007669"/>
    <property type="project" value="TreeGrafter"/>
</dbReference>
<dbReference type="GO" id="GO:0016655">
    <property type="term" value="F:oxidoreductase activity, acting on NAD(P)H, quinone or similar compound as acceptor"/>
    <property type="evidence" value="ECO:0007669"/>
    <property type="project" value="UniProtKB-UniRule"/>
</dbReference>
<dbReference type="GO" id="GO:0048038">
    <property type="term" value="F:quinone binding"/>
    <property type="evidence" value="ECO:0007669"/>
    <property type="project" value="UniProtKB-KW"/>
</dbReference>
<dbReference type="GO" id="GO:0009060">
    <property type="term" value="P:aerobic respiration"/>
    <property type="evidence" value="ECO:0007669"/>
    <property type="project" value="TreeGrafter"/>
</dbReference>
<dbReference type="GO" id="GO:0019684">
    <property type="term" value="P:photosynthesis, light reaction"/>
    <property type="evidence" value="ECO:0007669"/>
    <property type="project" value="UniProtKB-UniRule"/>
</dbReference>
<dbReference type="HAMAP" id="MF_01350">
    <property type="entry name" value="NDH1_NuoH"/>
    <property type="match status" value="1"/>
</dbReference>
<dbReference type="InterPro" id="IPR001694">
    <property type="entry name" value="NADH_UbQ_OxRdtase_su1/FPO"/>
</dbReference>
<dbReference type="InterPro" id="IPR018086">
    <property type="entry name" value="NADH_UbQ_OxRdtase_su1_CS"/>
</dbReference>
<dbReference type="NCBIfam" id="NF004741">
    <property type="entry name" value="PRK06076.1-2"/>
    <property type="match status" value="1"/>
</dbReference>
<dbReference type="PANTHER" id="PTHR11432">
    <property type="entry name" value="NADH DEHYDROGENASE SUBUNIT 1"/>
    <property type="match status" value="1"/>
</dbReference>
<dbReference type="PANTHER" id="PTHR11432:SF3">
    <property type="entry name" value="NADH-UBIQUINONE OXIDOREDUCTASE CHAIN 1"/>
    <property type="match status" value="1"/>
</dbReference>
<dbReference type="Pfam" id="PF00146">
    <property type="entry name" value="NADHdh"/>
    <property type="match status" value="1"/>
</dbReference>
<dbReference type="PROSITE" id="PS00667">
    <property type="entry name" value="COMPLEX1_ND1_1"/>
    <property type="match status" value="1"/>
</dbReference>
<dbReference type="PROSITE" id="PS00668">
    <property type="entry name" value="COMPLEX1_ND1_2"/>
    <property type="match status" value="1"/>
</dbReference>
<accession>Q06FP9</accession>
<name>NU1C_PELHO</name>
<sequence>MIIDTPEVQDINSFSRFESLQEIYGIVWMLVPILTLVVGITIGVLVIVWLEREISAGIQQRIGPEYAGPFGILQALADGTKLLLKENLLPSRGDSPLFSIGPSMAVISILLSYSVIPFSYRLVLADLNVGVFLWIAISSIAPIGLLMSGYGSNNKYSFLGGLRAAAQSISYEIPLTLCVLSISLLSNSSSTVDIIEAQSKYGFWGWNLWRQPIGFLIFLISSLAECERLPFDLPEAEEELVAGYQTEYSGIKFAFFYITSYFNLLVSSLFVTILYLGGWNMSIPYIDFLPLFEINNVGGIFRTTTELFITLAKTFFFLFISITTRWTLPRLRMDQLLNLGWKFLLPISLGNLLLTTSSQLLSL</sequence>
<organism>
    <name type="scientific">Pelargonium hortorum</name>
    <name type="common">Common geranium</name>
    <name type="synonym">Pelargonium inquinans x Pelargonium zonale</name>
    <dbReference type="NCBI Taxonomy" id="4031"/>
    <lineage>
        <taxon>Eukaryota</taxon>
        <taxon>Viridiplantae</taxon>
        <taxon>Streptophyta</taxon>
        <taxon>Embryophyta</taxon>
        <taxon>Tracheophyta</taxon>
        <taxon>Spermatophyta</taxon>
        <taxon>Magnoliopsida</taxon>
        <taxon>eudicotyledons</taxon>
        <taxon>Gunneridae</taxon>
        <taxon>Pentapetalae</taxon>
        <taxon>rosids</taxon>
        <taxon>malvids</taxon>
        <taxon>Geraniales</taxon>
        <taxon>Geraniaceae</taxon>
        <taxon>Pelargonium</taxon>
    </lineage>
</organism>
<keyword id="KW-0150">Chloroplast</keyword>
<keyword id="KW-0472">Membrane</keyword>
<keyword id="KW-0520">NAD</keyword>
<keyword id="KW-0521">NADP</keyword>
<keyword id="KW-0934">Plastid</keyword>
<keyword id="KW-0618">Plastoquinone</keyword>
<keyword id="KW-0874">Quinone</keyword>
<keyword id="KW-0793">Thylakoid</keyword>
<keyword id="KW-1278">Translocase</keyword>
<keyword id="KW-0812">Transmembrane</keyword>
<keyword id="KW-1133">Transmembrane helix</keyword>